<name>RPPH_LEGPH</name>
<accession>Q5ZRK9</accession>
<reference key="1">
    <citation type="journal article" date="2004" name="Science">
        <title>The genomic sequence of the accidental pathogen Legionella pneumophila.</title>
        <authorList>
            <person name="Chien M."/>
            <person name="Morozova I."/>
            <person name="Shi S."/>
            <person name="Sheng H."/>
            <person name="Chen J."/>
            <person name="Gomez S.M."/>
            <person name="Asamani G."/>
            <person name="Hill K."/>
            <person name="Nuara J."/>
            <person name="Feder M."/>
            <person name="Rineer J."/>
            <person name="Greenberg J.J."/>
            <person name="Steshenko V."/>
            <person name="Park S.H."/>
            <person name="Zhao B."/>
            <person name="Teplitskaya E."/>
            <person name="Edwards J.R."/>
            <person name="Pampou S."/>
            <person name="Georghiou A."/>
            <person name="Chou I.-C."/>
            <person name="Iannuccilli W."/>
            <person name="Ulz M.E."/>
            <person name="Kim D.H."/>
            <person name="Geringer-Sameth A."/>
            <person name="Goldsberry C."/>
            <person name="Morozov P."/>
            <person name="Fischer S.G."/>
            <person name="Segal G."/>
            <person name="Qu X."/>
            <person name="Rzhetsky A."/>
            <person name="Zhang P."/>
            <person name="Cayanis E."/>
            <person name="De Jong P.J."/>
            <person name="Ju J."/>
            <person name="Kalachikov S."/>
            <person name="Shuman H.A."/>
            <person name="Russo J.J."/>
        </authorList>
    </citation>
    <scope>NUCLEOTIDE SEQUENCE [LARGE SCALE GENOMIC DNA]</scope>
    <source>
        <strain>Philadelphia 1 / ATCC 33152 / DSM 7513</strain>
    </source>
</reference>
<feature type="chain" id="PRO_0000231914" description="RNA pyrophosphohydrolase">
    <location>
        <begin position="1"/>
        <end position="175"/>
    </location>
</feature>
<feature type="domain" description="Nudix hydrolase" evidence="1">
    <location>
        <begin position="7"/>
        <end position="150"/>
    </location>
</feature>
<feature type="short sequence motif" description="Nudix box">
    <location>
        <begin position="39"/>
        <end position="60"/>
    </location>
</feature>
<protein>
    <recommendedName>
        <fullName evidence="1">RNA pyrophosphohydrolase</fullName>
        <ecNumber evidence="1">3.6.1.-</ecNumber>
    </recommendedName>
    <alternativeName>
        <fullName evidence="1">(Di)nucleoside polyphosphate hydrolase</fullName>
    </alternativeName>
</protein>
<sequence>MVIDRAGYRLNVGIILVNDSDRVFWGRRSGHDAWQFPQGGLAPGETAMQAMYRELHEEVGLDKGDVEILGSTRRWLKYRLPKQYLRHGSEPLVIGQKQKWYLLKLVTSEQKVRLDLSDSPEFDSWRWVDFHEPEQQVIFFKRQVYIQALKELEPLLKKERRTPYGLKRKRGNQRA</sequence>
<organism>
    <name type="scientific">Legionella pneumophila subsp. pneumophila (strain Philadelphia 1 / ATCC 33152 / DSM 7513)</name>
    <dbReference type="NCBI Taxonomy" id="272624"/>
    <lineage>
        <taxon>Bacteria</taxon>
        <taxon>Pseudomonadati</taxon>
        <taxon>Pseudomonadota</taxon>
        <taxon>Gammaproteobacteria</taxon>
        <taxon>Legionellales</taxon>
        <taxon>Legionellaceae</taxon>
        <taxon>Legionella</taxon>
    </lineage>
</organism>
<dbReference type="EC" id="3.6.1.-" evidence="1"/>
<dbReference type="EMBL" id="AE017354">
    <property type="protein sequence ID" value="AAU28919.1"/>
    <property type="molecule type" value="Genomic_DNA"/>
</dbReference>
<dbReference type="RefSeq" id="WP_010948558.1">
    <property type="nucleotide sequence ID" value="NC_002942.5"/>
</dbReference>
<dbReference type="RefSeq" id="YP_096866.1">
    <property type="nucleotide sequence ID" value="NC_002942.5"/>
</dbReference>
<dbReference type="SMR" id="Q5ZRK9"/>
<dbReference type="STRING" id="272624.lpg2872"/>
<dbReference type="PaxDb" id="272624-lpg2872"/>
<dbReference type="KEGG" id="lpn:lpg2872"/>
<dbReference type="PATRIC" id="fig|272624.6.peg.3059"/>
<dbReference type="eggNOG" id="COG0494">
    <property type="taxonomic scope" value="Bacteria"/>
</dbReference>
<dbReference type="HOGENOM" id="CLU_087195_3_1_6"/>
<dbReference type="OrthoDB" id="9816040at2"/>
<dbReference type="Proteomes" id="UP000000609">
    <property type="component" value="Chromosome"/>
</dbReference>
<dbReference type="GO" id="GO:0016462">
    <property type="term" value="F:pyrophosphatase activity"/>
    <property type="evidence" value="ECO:0007669"/>
    <property type="project" value="UniProtKB-ARBA"/>
</dbReference>
<dbReference type="CDD" id="cd03671">
    <property type="entry name" value="NUDIX_Ap4A_hydrolase_plant_like"/>
    <property type="match status" value="1"/>
</dbReference>
<dbReference type="Gene3D" id="3.90.79.10">
    <property type="entry name" value="Nucleoside Triphosphate Pyrophosphohydrolase"/>
    <property type="match status" value="1"/>
</dbReference>
<dbReference type="HAMAP" id="MF_00298">
    <property type="entry name" value="Nudix_RppH"/>
    <property type="match status" value="1"/>
</dbReference>
<dbReference type="InterPro" id="IPR020476">
    <property type="entry name" value="Nudix_hydrolase"/>
</dbReference>
<dbReference type="InterPro" id="IPR015797">
    <property type="entry name" value="NUDIX_hydrolase-like_dom_sf"/>
</dbReference>
<dbReference type="InterPro" id="IPR020084">
    <property type="entry name" value="NUDIX_hydrolase_CS"/>
</dbReference>
<dbReference type="InterPro" id="IPR000086">
    <property type="entry name" value="NUDIX_hydrolase_dom"/>
</dbReference>
<dbReference type="InterPro" id="IPR022927">
    <property type="entry name" value="RppH"/>
</dbReference>
<dbReference type="NCBIfam" id="NF001937">
    <property type="entry name" value="PRK00714.1-4"/>
    <property type="match status" value="1"/>
</dbReference>
<dbReference type="NCBIfam" id="NF001938">
    <property type="entry name" value="PRK00714.1-5"/>
    <property type="match status" value="1"/>
</dbReference>
<dbReference type="PANTHER" id="PTHR43046">
    <property type="entry name" value="GDP-MANNOSE MANNOSYL HYDROLASE"/>
    <property type="match status" value="1"/>
</dbReference>
<dbReference type="PANTHER" id="PTHR43046:SF14">
    <property type="entry name" value="MUTT_NUDIX FAMILY PROTEIN"/>
    <property type="match status" value="1"/>
</dbReference>
<dbReference type="Pfam" id="PF00293">
    <property type="entry name" value="NUDIX"/>
    <property type="match status" value="1"/>
</dbReference>
<dbReference type="PRINTS" id="PR00502">
    <property type="entry name" value="NUDIXFAMILY"/>
</dbReference>
<dbReference type="SUPFAM" id="SSF55811">
    <property type="entry name" value="Nudix"/>
    <property type="match status" value="1"/>
</dbReference>
<dbReference type="PROSITE" id="PS51462">
    <property type="entry name" value="NUDIX"/>
    <property type="match status" value="1"/>
</dbReference>
<dbReference type="PROSITE" id="PS00893">
    <property type="entry name" value="NUDIX_BOX"/>
    <property type="match status" value="1"/>
</dbReference>
<proteinExistence type="inferred from homology"/>
<keyword id="KW-0378">Hydrolase</keyword>
<keyword id="KW-1185">Reference proteome</keyword>
<comment type="function">
    <text evidence="1">Accelerates the degradation of transcripts by removing pyrophosphate from the 5'-end of triphosphorylated RNA, leading to a more labile monophosphorylated state that can stimulate subsequent ribonuclease cleavage.</text>
</comment>
<comment type="cofactor">
    <cofactor evidence="1">
        <name>a divalent metal cation</name>
        <dbReference type="ChEBI" id="CHEBI:60240"/>
    </cofactor>
</comment>
<comment type="similarity">
    <text evidence="1">Belongs to the Nudix hydrolase family. RppH subfamily.</text>
</comment>
<evidence type="ECO:0000255" key="1">
    <source>
        <dbReference type="HAMAP-Rule" id="MF_00298"/>
    </source>
</evidence>
<gene>
    <name evidence="1" type="primary">rppH</name>
    <name evidence="1" type="synonym">nudH</name>
    <name type="ordered locus">lpg2872</name>
</gene>